<evidence type="ECO:0000255" key="1">
    <source>
        <dbReference type="HAMAP-Rule" id="MF_00096"/>
    </source>
</evidence>
<keyword id="KW-0067">ATP-binding</keyword>
<keyword id="KW-0227">DNA damage</keyword>
<keyword id="KW-0234">DNA repair</keyword>
<keyword id="KW-0238">DNA-binding</keyword>
<keyword id="KW-0547">Nucleotide-binding</keyword>
<accession>Q048Y4</accession>
<reference key="1">
    <citation type="journal article" date="2006" name="Proc. Natl. Acad. Sci. U.S.A.">
        <title>Comparative genomics of the lactic acid bacteria.</title>
        <authorList>
            <person name="Makarova K.S."/>
            <person name="Slesarev A."/>
            <person name="Wolf Y.I."/>
            <person name="Sorokin A."/>
            <person name="Mirkin B."/>
            <person name="Koonin E.V."/>
            <person name="Pavlov A."/>
            <person name="Pavlova N."/>
            <person name="Karamychev V."/>
            <person name="Polouchine N."/>
            <person name="Shakhova V."/>
            <person name="Grigoriev I."/>
            <person name="Lou Y."/>
            <person name="Rohksar D."/>
            <person name="Lucas S."/>
            <person name="Huang K."/>
            <person name="Goodstein D.M."/>
            <person name="Hawkins T."/>
            <person name="Plengvidhya V."/>
            <person name="Welker D."/>
            <person name="Hughes J."/>
            <person name="Goh Y."/>
            <person name="Benson A."/>
            <person name="Baldwin K."/>
            <person name="Lee J.-H."/>
            <person name="Diaz-Muniz I."/>
            <person name="Dosti B."/>
            <person name="Smeianov V."/>
            <person name="Wechter W."/>
            <person name="Barabote R."/>
            <person name="Lorca G."/>
            <person name="Altermann E."/>
            <person name="Barrangou R."/>
            <person name="Ganesan B."/>
            <person name="Xie Y."/>
            <person name="Rawsthorne H."/>
            <person name="Tamir D."/>
            <person name="Parker C."/>
            <person name="Breidt F."/>
            <person name="Broadbent J.R."/>
            <person name="Hutkins R."/>
            <person name="O'Sullivan D."/>
            <person name="Steele J."/>
            <person name="Unlu G."/>
            <person name="Saier M.H. Jr."/>
            <person name="Klaenhammer T."/>
            <person name="Richardson P."/>
            <person name="Kozyavkin S."/>
            <person name="Weimer B.C."/>
            <person name="Mills D.A."/>
        </authorList>
    </citation>
    <scope>NUCLEOTIDE SEQUENCE [LARGE SCALE GENOMIC DNA]</scope>
    <source>
        <strain>ATCC BAA-365 / Lb-18</strain>
    </source>
</reference>
<gene>
    <name evidence="1" type="primary">mutS</name>
    <name type="ordered locus">LBUL_1495</name>
</gene>
<dbReference type="EMBL" id="CP000412">
    <property type="protein sequence ID" value="ABJ58988.1"/>
    <property type="molecule type" value="Genomic_DNA"/>
</dbReference>
<dbReference type="RefSeq" id="WP_011678485.1">
    <property type="nucleotide sequence ID" value="NC_008529.1"/>
</dbReference>
<dbReference type="SMR" id="Q048Y4"/>
<dbReference type="KEGG" id="lbu:LBUL_1495"/>
<dbReference type="HOGENOM" id="CLU_002472_1_3_9"/>
<dbReference type="BioCyc" id="LDEL321956:LBUL_RS07065-MONOMER"/>
<dbReference type="GO" id="GO:0005829">
    <property type="term" value="C:cytosol"/>
    <property type="evidence" value="ECO:0007669"/>
    <property type="project" value="TreeGrafter"/>
</dbReference>
<dbReference type="GO" id="GO:0005524">
    <property type="term" value="F:ATP binding"/>
    <property type="evidence" value="ECO:0007669"/>
    <property type="project" value="UniProtKB-UniRule"/>
</dbReference>
<dbReference type="GO" id="GO:0140664">
    <property type="term" value="F:ATP-dependent DNA damage sensor activity"/>
    <property type="evidence" value="ECO:0007669"/>
    <property type="project" value="InterPro"/>
</dbReference>
<dbReference type="GO" id="GO:0003684">
    <property type="term" value="F:damaged DNA binding"/>
    <property type="evidence" value="ECO:0007669"/>
    <property type="project" value="UniProtKB-UniRule"/>
</dbReference>
<dbReference type="GO" id="GO:0030983">
    <property type="term" value="F:mismatched DNA binding"/>
    <property type="evidence" value="ECO:0007669"/>
    <property type="project" value="InterPro"/>
</dbReference>
<dbReference type="GO" id="GO:0006298">
    <property type="term" value="P:mismatch repair"/>
    <property type="evidence" value="ECO:0007669"/>
    <property type="project" value="UniProtKB-UniRule"/>
</dbReference>
<dbReference type="CDD" id="cd03284">
    <property type="entry name" value="ABC_MutS1"/>
    <property type="match status" value="1"/>
</dbReference>
<dbReference type="FunFam" id="1.10.1420.10:FF:000001">
    <property type="entry name" value="DNA mismatch repair protein MutS"/>
    <property type="match status" value="1"/>
</dbReference>
<dbReference type="FunFam" id="3.40.1170.10:FF:000001">
    <property type="entry name" value="DNA mismatch repair protein MutS"/>
    <property type="match status" value="1"/>
</dbReference>
<dbReference type="FunFam" id="3.40.50.300:FF:000870">
    <property type="entry name" value="MutS protein homolog 4"/>
    <property type="match status" value="1"/>
</dbReference>
<dbReference type="Gene3D" id="1.10.1420.10">
    <property type="match status" value="2"/>
</dbReference>
<dbReference type="Gene3D" id="3.40.1170.10">
    <property type="entry name" value="DNA repair protein MutS, domain I"/>
    <property type="match status" value="1"/>
</dbReference>
<dbReference type="Gene3D" id="3.30.420.110">
    <property type="entry name" value="MutS, connector domain"/>
    <property type="match status" value="1"/>
</dbReference>
<dbReference type="Gene3D" id="3.40.50.300">
    <property type="entry name" value="P-loop containing nucleotide triphosphate hydrolases"/>
    <property type="match status" value="1"/>
</dbReference>
<dbReference type="HAMAP" id="MF_00096">
    <property type="entry name" value="MutS"/>
    <property type="match status" value="1"/>
</dbReference>
<dbReference type="InterPro" id="IPR005748">
    <property type="entry name" value="DNA_mismatch_repair_MutS"/>
</dbReference>
<dbReference type="InterPro" id="IPR007695">
    <property type="entry name" value="DNA_mismatch_repair_MutS-lik_N"/>
</dbReference>
<dbReference type="InterPro" id="IPR017261">
    <property type="entry name" value="DNA_mismatch_repair_MutS/MSH"/>
</dbReference>
<dbReference type="InterPro" id="IPR000432">
    <property type="entry name" value="DNA_mismatch_repair_MutS_C"/>
</dbReference>
<dbReference type="InterPro" id="IPR007861">
    <property type="entry name" value="DNA_mismatch_repair_MutS_clamp"/>
</dbReference>
<dbReference type="InterPro" id="IPR007696">
    <property type="entry name" value="DNA_mismatch_repair_MutS_core"/>
</dbReference>
<dbReference type="InterPro" id="IPR016151">
    <property type="entry name" value="DNA_mismatch_repair_MutS_N"/>
</dbReference>
<dbReference type="InterPro" id="IPR036187">
    <property type="entry name" value="DNA_mismatch_repair_MutS_sf"/>
</dbReference>
<dbReference type="InterPro" id="IPR007860">
    <property type="entry name" value="DNA_mmatch_repair_MutS_con_dom"/>
</dbReference>
<dbReference type="InterPro" id="IPR045076">
    <property type="entry name" value="MutS"/>
</dbReference>
<dbReference type="InterPro" id="IPR036678">
    <property type="entry name" value="MutS_con_dom_sf"/>
</dbReference>
<dbReference type="InterPro" id="IPR027417">
    <property type="entry name" value="P-loop_NTPase"/>
</dbReference>
<dbReference type="NCBIfam" id="TIGR01070">
    <property type="entry name" value="mutS1"/>
    <property type="match status" value="1"/>
</dbReference>
<dbReference type="NCBIfam" id="NF003810">
    <property type="entry name" value="PRK05399.1"/>
    <property type="match status" value="1"/>
</dbReference>
<dbReference type="PANTHER" id="PTHR11361:SF34">
    <property type="entry name" value="DNA MISMATCH REPAIR PROTEIN MSH1, MITOCHONDRIAL"/>
    <property type="match status" value="1"/>
</dbReference>
<dbReference type="PANTHER" id="PTHR11361">
    <property type="entry name" value="DNA MISMATCH REPAIR PROTEIN MUTS FAMILY MEMBER"/>
    <property type="match status" value="1"/>
</dbReference>
<dbReference type="Pfam" id="PF01624">
    <property type="entry name" value="MutS_I"/>
    <property type="match status" value="1"/>
</dbReference>
<dbReference type="Pfam" id="PF05188">
    <property type="entry name" value="MutS_II"/>
    <property type="match status" value="1"/>
</dbReference>
<dbReference type="Pfam" id="PF05192">
    <property type="entry name" value="MutS_III"/>
    <property type="match status" value="1"/>
</dbReference>
<dbReference type="Pfam" id="PF05190">
    <property type="entry name" value="MutS_IV"/>
    <property type="match status" value="1"/>
</dbReference>
<dbReference type="Pfam" id="PF00488">
    <property type="entry name" value="MutS_V"/>
    <property type="match status" value="1"/>
</dbReference>
<dbReference type="PIRSF" id="PIRSF037677">
    <property type="entry name" value="DNA_mis_repair_Msh6"/>
    <property type="match status" value="1"/>
</dbReference>
<dbReference type="SMART" id="SM00534">
    <property type="entry name" value="MUTSac"/>
    <property type="match status" value="1"/>
</dbReference>
<dbReference type="SMART" id="SM00533">
    <property type="entry name" value="MUTSd"/>
    <property type="match status" value="1"/>
</dbReference>
<dbReference type="SUPFAM" id="SSF55271">
    <property type="entry name" value="DNA repair protein MutS, domain I"/>
    <property type="match status" value="1"/>
</dbReference>
<dbReference type="SUPFAM" id="SSF53150">
    <property type="entry name" value="DNA repair protein MutS, domain II"/>
    <property type="match status" value="1"/>
</dbReference>
<dbReference type="SUPFAM" id="SSF48334">
    <property type="entry name" value="DNA repair protein MutS, domain III"/>
    <property type="match status" value="1"/>
</dbReference>
<dbReference type="SUPFAM" id="SSF52540">
    <property type="entry name" value="P-loop containing nucleoside triphosphate hydrolases"/>
    <property type="match status" value="1"/>
</dbReference>
<dbReference type="PROSITE" id="PS00486">
    <property type="entry name" value="DNA_MISMATCH_REPAIR_2"/>
    <property type="match status" value="1"/>
</dbReference>
<protein>
    <recommendedName>
        <fullName evidence="1">DNA mismatch repair protein MutS</fullName>
    </recommendedName>
</protein>
<feature type="chain" id="PRO_1000057636" description="DNA mismatch repair protein MutS">
    <location>
        <begin position="1"/>
        <end position="856"/>
    </location>
</feature>
<feature type="binding site" evidence="1">
    <location>
        <begin position="607"/>
        <end position="614"/>
    </location>
    <ligand>
        <name>ATP</name>
        <dbReference type="ChEBI" id="CHEBI:30616"/>
    </ligand>
</feature>
<name>MUTS_LACDB</name>
<proteinExistence type="inferred from homology"/>
<sequence>MPRKATTPMMEQYYQIKDQYPDAFLFYRVGDFYELYEDDAIKGSQILELTLTHRSNKSENPIPMAGVPHMAVDSYVNTLVEKGYKVAICEQLEDPKKAKGMVKRGIIQLVTPGTKMAQGPDDSQESNYLTSVVEKAGGYGLAYSDLSTGEIFVTHVKHYAEVVNELLSLRTREVVFAGNLSASDRDRLQKANITVSEPAELEGEHAEISYVQQKLTDSMEKAAVRQLVVYLLATQKRSLAHLQVAESFEIGQYLQMANTVQRNLELTQSATTGRKQGSLFWVLDKTTTAMGGRLLKQWLSRPLLSLDRIKQRQQMVQALLDDYFTRENIVDSLKGVYDLERLSGRVAFGNVNPRELLQLAKSLEATKLIIQTLVESGNPDLEKYGQGIDPQSELAESITNCLVDQPPISAKDGGIIRAGVSEDLDKYREAMNGGKKWLAQMEMEERQRTGIDNLKIGYNRVFGYFIQVSKGNVAKVPQDRYTRKQTLTNAERYITPELKEHENLILEAESRSTDLEYELFSQLREAVKAHIPDLQELGRQLAALDVFVAFAQDAEEKNYCRPSFSSKNEIAVKNGRHPVVEAVLPAGSYIPNDLVMDEDTSIYLITGPNMSGKSTYMRQLALIAIMAQIGSFVPADSAKLPVFDQIFTRIGAADDLYSGKSTFMVEMSEANEALQHASSRSLVLFDEIGRGTATYDGMALAGAIIKYLHDKVGAKTLFATHYHELTELDETLLHLKNIHVGATEENGKLIFLHKILPGPADQSYGIHVAKLAGLPRAVLREASSMLKRLEAEGAREINPSRQQLDLFSPVEVVEENPLKAEQEELLDEISQVNLNEKTPLEVMQLVADWQQALKEE</sequence>
<comment type="function">
    <text evidence="1">This protein is involved in the repair of mismatches in DNA. It is possible that it carries out the mismatch recognition step. This protein has a weak ATPase activity.</text>
</comment>
<comment type="similarity">
    <text evidence="1">Belongs to the DNA mismatch repair MutS family.</text>
</comment>
<organism>
    <name type="scientific">Lactobacillus delbrueckii subsp. bulgaricus (strain ATCC BAA-365 / Lb-18)</name>
    <dbReference type="NCBI Taxonomy" id="321956"/>
    <lineage>
        <taxon>Bacteria</taxon>
        <taxon>Bacillati</taxon>
        <taxon>Bacillota</taxon>
        <taxon>Bacilli</taxon>
        <taxon>Lactobacillales</taxon>
        <taxon>Lactobacillaceae</taxon>
        <taxon>Lactobacillus</taxon>
    </lineage>
</organism>